<protein>
    <recommendedName>
        <fullName evidence="1">Ribonuclease HIII</fullName>
        <shortName evidence="1">RNase HIII</shortName>
        <ecNumber evidence="1">3.1.26.4</ecNumber>
    </recommendedName>
</protein>
<evidence type="ECO:0000255" key="1">
    <source>
        <dbReference type="HAMAP-Rule" id="MF_00053"/>
    </source>
</evidence>
<evidence type="ECO:0000255" key="2">
    <source>
        <dbReference type="PROSITE-ProRule" id="PRU01319"/>
    </source>
</evidence>
<comment type="function">
    <text evidence="1">Endonuclease that specifically degrades the RNA of RNA-DNA hybrids.</text>
</comment>
<comment type="catalytic activity">
    <reaction evidence="1">
        <text>Endonucleolytic cleavage to 5'-phosphomonoester.</text>
        <dbReference type="EC" id="3.1.26.4"/>
    </reaction>
</comment>
<comment type="cofactor">
    <cofactor evidence="1">
        <name>Mn(2+)</name>
        <dbReference type="ChEBI" id="CHEBI:29035"/>
    </cofactor>
    <cofactor evidence="1">
        <name>Mg(2+)</name>
        <dbReference type="ChEBI" id="CHEBI:18420"/>
    </cofactor>
    <text evidence="1">Manganese or magnesium. Binds 1 divalent metal ion per monomer in the absence of substrate. May bind a second metal ion after substrate binding.</text>
</comment>
<comment type="subcellular location">
    <subcellularLocation>
        <location evidence="1">Cytoplasm</location>
    </subcellularLocation>
</comment>
<comment type="similarity">
    <text evidence="1">Belongs to the RNase HII family. RnhC subfamily.</text>
</comment>
<organism>
    <name type="scientific">Streptococcus thermophilus (strain CNRZ 1066)</name>
    <dbReference type="NCBI Taxonomy" id="299768"/>
    <lineage>
        <taxon>Bacteria</taxon>
        <taxon>Bacillati</taxon>
        <taxon>Bacillota</taxon>
        <taxon>Bacilli</taxon>
        <taxon>Lactobacillales</taxon>
        <taxon>Streptococcaceae</taxon>
        <taxon>Streptococcus</taxon>
    </lineage>
</organism>
<dbReference type="EC" id="3.1.26.4" evidence="1"/>
<dbReference type="EMBL" id="CP000024">
    <property type="protein sequence ID" value="AAV63283.1"/>
    <property type="molecule type" value="Genomic_DNA"/>
</dbReference>
<dbReference type="RefSeq" id="WP_011227558.1">
    <property type="nucleotide sequence ID" value="NC_006449.1"/>
</dbReference>
<dbReference type="SMR" id="Q5LY37"/>
<dbReference type="KEGG" id="stc:str1765"/>
<dbReference type="HOGENOM" id="CLU_059546_1_0_9"/>
<dbReference type="GO" id="GO:0005737">
    <property type="term" value="C:cytoplasm"/>
    <property type="evidence" value="ECO:0007669"/>
    <property type="project" value="UniProtKB-SubCell"/>
</dbReference>
<dbReference type="GO" id="GO:0032299">
    <property type="term" value="C:ribonuclease H2 complex"/>
    <property type="evidence" value="ECO:0007669"/>
    <property type="project" value="TreeGrafter"/>
</dbReference>
<dbReference type="GO" id="GO:0000287">
    <property type="term" value="F:magnesium ion binding"/>
    <property type="evidence" value="ECO:0007669"/>
    <property type="project" value="UniProtKB-UniRule"/>
</dbReference>
<dbReference type="GO" id="GO:0003723">
    <property type="term" value="F:RNA binding"/>
    <property type="evidence" value="ECO:0007669"/>
    <property type="project" value="InterPro"/>
</dbReference>
<dbReference type="GO" id="GO:0004523">
    <property type="term" value="F:RNA-DNA hybrid ribonuclease activity"/>
    <property type="evidence" value="ECO:0007669"/>
    <property type="project" value="UniProtKB-UniRule"/>
</dbReference>
<dbReference type="GO" id="GO:0043137">
    <property type="term" value="P:DNA replication, removal of RNA primer"/>
    <property type="evidence" value="ECO:0007669"/>
    <property type="project" value="TreeGrafter"/>
</dbReference>
<dbReference type="GO" id="GO:0006298">
    <property type="term" value="P:mismatch repair"/>
    <property type="evidence" value="ECO:0007669"/>
    <property type="project" value="TreeGrafter"/>
</dbReference>
<dbReference type="CDD" id="cd06590">
    <property type="entry name" value="RNase_HII_bacteria_HIII_like"/>
    <property type="match status" value="1"/>
</dbReference>
<dbReference type="CDD" id="cd14796">
    <property type="entry name" value="RNAse_HIII_N"/>
    <property type="match status" value="1"/>
</dbReference>
<dbReference type="FunFam" id="3.30.420.10:FF:000047">
    <property type="entry name" value="Ribonuclease HIII"/>
    <property type="match status" value="1"/>
</dbReference>
<dbReference type="Gene3D" id="3.30.420.10">
    <property type="entry name" value="Ribonuclease H-like superfamily/Ribonuclease H"/>
    <property type="match status" value="1"/>
</dbReference>
<dbReference type="Gene3D" id="3.30.310.10">
    <property type="entry name" value="TATA-Binding Protein"/>
    <property type="match status" value="1"/>
</dbReference>
<dbReference type="HAMAP" id="MF_00053">
    <property type="entry name" value="RNase_HIII"/>
    <property type="match status" value="1"/>
</dbReference>
<dbReference type="InterPro" id="IPR001352">
    <property type="entry name" value="RNase_HII/HIII"/>
</dbReference>
<dbReference type="InterPro" id="IPR024567">
    <property type="entry name" value="RNase_HII/HIII_dom"/>
</dbReference>
<dbReference type="InterPro" id="IPR004641">
    <property type="entry name" value="RNase_HIII"/>
</dbReference>
<dbReference type="InterPro" id="IPR024568">
    <property type="entry name" value="RNase_HIII_N"/>
</dbReference>
<dbReference type="InterPro" id="IPR012337">
    <property type="entry name" value="RNaseH-like_sf"/>
</dbReference>
<dbReference type="InterPro" id="IPR036397">
    <property type="entry name" value="RNaseH_sf"/>
</dbReference>
<dbReference type="InterPro" id="IPR012295">
    <property type="entry name" value="TBP_dom_sf"/>
</dbReference>
<dbReference type="NCBIfam" id="TIGR00716">
    <property type="entry name" value="rnhC"/>
    <property type="match status" value="1"/>
</dbReference>
<dbReference type="PANTHER" id="PTHR10954:SF23">
    <property type="entry name" value="RIBONUCLEASE"/>
    <property type="match status" value="1"/>
</dbReference>
<dbReference type="PANTHER" id="PTHR10954">
    <property type="entry name" value="RIBONUCLEASE H2 SUBUNIT A"/>
    <property type="match status" value="1"/>
</dbReference>
<dbReference type="Pfam" id="PF11858">
    <property type="entry name" value="DUF3378"/>
    <property type="match status" value="1"/>
</dbReference>
<dbReference type="Pfam" id="PF01351">
    <property type="entry name" value="RNase_HII"/>
    <property type="match status" value="1"/>
</dbReference>
<dbReference type="PIRSF" id="PIRSF037748">
    <property type="entry name" value="RnhC"/>
    <property type="match status" value="1"/>
</dbReference>
<dbReference type="SUPFAM" id="SSF53098">
    <property type="entry name" value="Ribonuclease H-like"/>
    <property type="match status" value="1"/>
</dbReference>
<dbReference type="PROSITE" id="PS51975">
    <property type="entry name" value="RNASE_H_2"/>
    <property type="match status" value="1"/>
</dbReference>
<proteinExistence type="inferred from homology"/>
<keyword id="KW-0963">Cytoplasm</keyword>
<keyword id="KW-0255">Endonuclease</keyword>
<keyword id="KW-0378">Hydrolase</keyword>
<keyword id="KW-0460">Magnesium</keyword>
<keyword id="KW-0479">Metal-binding</keyword>
<keyword id="KW-0540">Nuclease</keyword>
<reference key="1">
    <citation type="journal article" date="2004" name="Nat. Biotechnol.">
        <title>Complete sequence and comparative genome analysis of the dairy bacterium Streptococcus thermophilus.</title>
        <authorList>
            <person name="Bolotin A."/>
            <person name="Quinquis B."/>
            <person name="Renault P."/>
            <person name="Sorokin A."/>
            <person name="Ehrlich S.D."/>
            <person name="Kulakauskas S."/>
            <person name="Lapidus A."/>
            <person name="Goltsman E."/>
            <person name="Mazur M."/>
            <person name="Pusch G.D."/>
            <person name="Fonstein M."/>
            <person name="Overbeek R."/>
            <person name="Kyprides N."/>
            <person name="Purnelle B."/>
            <person name="Prozzi D."/>
            <person name="Ngui K."/>
            <person name="Masuy D."/>
            <person name="Hancy F."/>
            <person name="Burteau S."/>
            <person name="Boutry M."/>
            <person name="Delcour J."/>
            <person name="Goffeau A."/>
            <person name="Hols P."/>
        </authorList>
    </citation>
    <scope>NUCLEOTIDE SEQUENCE [LARGE SCALE GENOMIC DNA]</scope>
    <source>
        <strain>CNRZ 1066</strain>
    </source>
</reference>
<feature type="chain" id="PRO_0000111707" description="Ribonuclease HIII">
    <location>
        <begin position="1"/>
        <end position="296"/>
    </location>
</feature>
<feature type="domain" description="RNase H type-2" evidence="2">
    <location>
        <begin position="80"/>
        <end position="296"/>
    </location>
</feature>
<feature type="binding site" evidence="1">
    <location>
        <position position="86"/>
    </location>
    <ligand>
        <name>a divalent metal cation</name>
        <dbReference type="ChEBI" id="CHEBI:60240"/>
    </ligand>
</feature>
<feature type="binding site" evidence="1">
    <location>
        <position position="87"/>
    </location>
    <ligand>
        <name>a divalent metal cation</name>
        <dbReference type="ChEBI" id="CHEBI:60240"/>
    </ligand>
</feature>
<feature type="binding site" evidence="1">
    <location>
        <position position="191"/>
    </location>
    <ligand>
        <name>a divalent metal cation</name>
        <dbReference type="ChEBI" id="CHEBI:60240"/>
    </ligand>
</feature>
<sequence>MGTIVLKMTAEQISVLQKDLASYATATKNPYAFFSAKVDGTSVIAYTSGKVTFQGAKPEILASRFGYQAEPKQSPDGQNLALIGSDEVGNGSYFGGLAVVASLVTPADHAFLKSLGVDDSKNLNDSKIRQIAPLLEEKIPHKALLLSPRKYNEVVGDGKAHNAVSVKVALHNQAIFLLLQSGAKPDKIVIDAFISEKNYQKYLKNERNHFEFPITLEEKAEGKYLAVAVSSIIARNLFLKNLDKLSQEVGYTLPSGAGAKSDQVAAKLLQAYGDQALQTTAKYHFANTKKAYQRLK</sequence>
<name>RNH3_STRT1</name>
<gene>
    <name evidence="1" type="primary">rnhC</name>
    <name type="ordered locus">str1765</name>
</gene>
<accession>Q5LY37</accession>